<protein>
    <recommendedName>
        <fullName>EF-hand calcium-binding domain-containing protein 11</fullName>
    </recommendedName>
</protein>
<keyword id="KW-0025">Alternative splicing</keyword>
<keyword id="KW-0106">Calcium</keyword>
<keyword id="KW-0479">Metal-binding</keyword>
<keyword id="KW-1267">Proteomics identification</keyword>
<keyword id="KW-1185">Reference proteome</keyword>
<keyword id="KW-0677">Repeat</keyword>
<comment type="interaction">
    <interactant intactId="EBI-18688654">
        <id>Q9BUY7</id>
    </interactant>
    <interactant intactId="EBI-1052491">
        <id>P15121</id>
        <label>AKR1B1</label>
    </interactant>
    <organismsDiffer>false</organismsDiffer>
    <experiments>3</experiments>
</comment>
<comment type="interaction">
    <interactant intactId="EBI-18688654">
        <id>Q9BUY7</id>
    </interactant>
    <interactant intactId="EBI-19157918">
        <id>Q9UJ68</id>
        <label>MSRA</label>
    </interactant>
    <organismsDiffer>false</organismsDiffer>
    <experiments>3</experiments>
</comment>
<comment type="alternative products">
    <event type="alternative splicing"/>
    <isoform>
        <id>Q9BUY7-1</id>
        <name>1</name>
        <sequence type="displayed"/>
    </isoform>
    <isoform>
        <id>Q9BUY7-2</id>
        <name>2</name>
        <sequence type="described" ref="VSP_025100"/>
    </isoform>
    <isoform>
        <id>Q9BUY7-3</id>
        <name>3</name>
        <sequence type="described" ref="VSP_025100 VSP_025101"/>
    </isoform>
    <isoform>
        <id>Q9BUY7-4</id>
        <name>4</name>
        <sequence type="described" ref="VSP_041089 VSP_041090"/>
    </isoform>
    <isoform>
        <id>Q9BUY7-5</id>
        <name>5</name>
        <sequence type="described" ref="VSP_054591"/>
    </isoform>
    <isoform>
        <id>Q9BUY7-6</id>
        <name>6</name>
        <sequence type="described" ref="VSP_055729"/>
    </isoform>
</comment>
<comment type="miscellaneous">
    <molecule>Isoform 4</molecule>
    <text evidence="5">May be produced at very low levels due to a premature stop codon in the mRNA, leading to nonsense-mediated mRNA decay.</text>
</comment>
<comment type="sequence caution" evidence="5">
    <conflict type="erroneous translation">
        <sequence resource="EMBL-CDS" id="CAD62325"/>
    </conflict>
    <text>Wrong choice of CDS.</text>
</comment>
<evidence type="ECO:0000255" key="1">
    <source>
        <dbReference type="PROSITE-ProRule" id="PRU00448"/>
    </source>
</evidence>
<evidence type="ECO:0000303" key="2">
    <source>
    </source>
</evidence>
<evidence type="ECO:0000303" key="3">
    <source>
    </source>
</evidence>
<evidence type="ECO:0000303" key="4">
    <source ref="1"/>
</evidence>
<evidence type="ECO:0000305" key="5"/>
<name>EFC11_HUMAN</name>
<sequence>MFFSEARARSRTWEASPSEHRKWVEVFKACDEDHKGYLSREDFKTAVVMLFGYKPSKIEVDSVMSSINPNTSGILLEGFLNIVRKKKEAQRYRNEVRHIFTAFDTYYRGFLTLEDFKKAFRQVAPKLPERTVLEVFREVDRDSDGHVSFRDFEYALNYGQKEA</sequence>
<proteinExistence type="evidence at protein level"/>
<accession>Q9BUY7</accession>
<accession>B3KT10</accession>
<accession>B7Z5G9</accession>
<accession>G3V5G1</accession>
<accession>Q86T09</accession>
<accession>Q86TV7</accession>
<accession>Q8NDQ1</accession>
<gene>
    <name type="primary">EFCAB11</name>
    <name type="synonym">C14orf143</name>
</gene>
<dbReference type="EMBL" id="BX161414">
    <property type="protein sequence ID" value="CAD61889.1"/>
    <property type="molecule type" value="mRNA"/>
</dbReference>
<dbReference type="EMBL" id="BX247991">
    <property type="protein sequence ID" value="CAD62325.1"/>
    <property type="status" value="ALT_SEQ"/>
    <property type="molecule type" value="mRNA"/>
</dbReference>
<dbReference type="EMBL" id="AK094740">
    <property type="protein sequence ID" value="BAG52922.1"/>
    <property type="molecule type" value="mRNA"/>
</dbReference>
<dbReference type="EMBL" id="AK298930">
    <property type="protein sequence ID" value="BAH12905.1"/>
    <property type="molecule type" value="mRNA"/>
</dbReference>
<dbReference type="EMBL" id="AL832321">
    <property type="protein sequence ID" value="CAD38616.1"/>
    <property type="molecule type" value="mRNA"/>
</dbReference>
<dbReference type="EMBL" id="AL137128">
    <property type="status" value="NOT_ANNOTATED_CDS"/>
    <property type="molecule type" value="Genomic_DNA"/>
</dbReference>
<dbReference type="EMBL" id="AL137230">
    <property type="status" value="NOT_ANNOTATED_CDS"/>
    <property type="molecule type" value="Genomic_DNA"/>
</dbReference>
<dbReference type="EMBL" id="AL163011">
    <property type="status" value="NOT_ANNOTATED_CDS"/>
    <property type="molecule type" value="Genomic_DNA"/>
</dbReference>
<dbReference type="EMBL" id="CH471061">
    <property type="protein sequence ID" value="EAW81411.1"/>
    <property type="molecule type" value="Genomic_DNA"/>
</dbReference>
<dbReference type="EMBL" id="BC001787">
    <property type="protein sequence ID" value="AAH01787.1"/>
    <property type="molecule type" value="mRNA"/>
</dbReference>
<dbReference type="CCDS" id="CCDS61522.1">
    <molecule id="Q9BUY7-6"/>
</dbReference>
<dbReference type="CCDS" id="CCDS61523.1">
    <molecule id="Q9BUY7-2"/>
</dbReference>
<dbReference type="CCDS" id="CCDS61524.1">
    <molecule id="Q9BUY7-3"/>
</dbReference>
<dbReference type="CCDS" id="CCDS61525.1">
    <molecule id="Q9BUY7-5"/>
</dbReference>
<dbReference type="CCDS" id="CCDS9887.1">
    <molecule id="Q9BUY7-1"/>
</dbReference>
<dbReference type="RefSeq" id="NP_001271195.1">
    <molecule id="Q9BUY7-5"/>
    <property type="nucleotide sequence ID" value="NM_001284266.2"/>
</dbReference>
<dbReference type="RefSeq" id="NP_001271196.1">
    <molecule id="Q9BUY7-6"/>
    <property type="nucleotide sequence ID" value="NM_001284267.2"/>
</dbReference>
<dbReference type="RefSeq" id="NP_001271197.1">
    <molecule id="Q9BUY7-3"/>
    <property type="nucleotide sequence ID" value="NM_001284268.2"/>
</dbReference>
<dbReference type="RefSeq" id="NP_001271198.1">
    <molecule id="Q9BUY7-2"/>
    <property type="nucleotide sequence ID" value="NM_001284269.2"/>
</dbReference>
<dbReference type="RefSeq" id="NP_660274.1">
    <molecule id="Q9BUY7-1"/>
    <property type="nucleotide sequence ID" value="NM_145231.4"/>
</dbReference>
<dbReference type="SMR" id="Q9BUY7"/>
<dbReference type="BioGRID" id="124670">
    <property type="interactions" value="15"/>
</dbReference>
<dbReference type="FunCoup" id="Q9BUY7">
    <property type="interactions" value="383"/>
</dbReference>
<dbReference type="IntAct" id="Q9BUY7">
    <property type="interactions" value="13"/>
</dbReference>
<dbReference type="MINT" id="Q9BUY7"/>
<dbReference type="STRING" id="9606.ENSP00000326267"/>
<dbReference type="iPTMnet" id="Q9BUY7"/>
<dbReference type="PhosphoSitePlus" id="Q9BUY7"/>
<dbReference type="BioMuta" id="EFCAB11"/>
<dbReference type="DMDM" id="74762709"/>
<dbReference type="MassIVE" id="Q9BUY7"/>
<dbReference type="PaxDb" id="9606-ENSP00000326267"/>
<dbReference type="PeptideAtlas" id="Q9BUY7"/>
<dbReference type="ProteomicsDB" id="33518"/>
<dbReference type="ProteomicsDB" id="6693"/>
<dbReference type="ProteomicsDB" id="79144">
    <molecule id="Q9BUY7-1"/>
</dbReference>
<dbReference type="ProteomicsDB" id="79145">
    <molecule id="Q9BUY7-2"/>
</dbReference>
<dbReference type="ProteomicsDB" id="79146">
    <molecule id="Q9BUY7-3"/>
</dbReference>
<dbReference type="Pumba" id="Q9BUY7"/>
<dbReference type="Antibodypedia" id="65215">
    <property type="antibodies" value="17 antibodies from 10 providers"/>
</dbReference>
<dbReference type="DNASU" id="90141"/>
<dbReference type="Ensembl" id="ENST00000316738.12">
    <molecule id="Q9BUY7-1"/>
    <property type="protein sequence ID" value="ENSP00000326267.7"/>
    <property type="gene ID" value="ENSG00000140025.16"/>
</dbReference>
<dbReference type="Ensembl" id="ENST00000538485.6">
    <molecule id="Q9BUY7-5"/>
    <property type="protein sequence ID" value="ENSP00000438072.2"/>
    <property type="gene ID" value="ENSG00000140025.16"/>
</dbReference>
<dbReference type="Ensembl" id="ENST00000555872.5">
    <molecule id="Q9BUY7-2"/>
    <property type="protein sequence ID" value="ENSP00000452320.1"/>
    <property type="gene ID" value="ENSG00000140025.16"/>
</dbReference>
<dbReference type="Ensembl" id="ENST00000556005.1">
    <molecule id="Q9BUY7-3"/>
    <property type="protein sequence ID" value="ENSP00000452143.1"/>
    <property type="gene ID" value="ENSG00000140025.16"/>
</dbReference>
<dbReference type="Ensembl" id="ENST00000556609.5">
    <molecule id="Q9BUY7-6"/>
    <property type="protein sequence ID" value="ENSP00000452335.1"/>
    <property type="gene ID" value="ENSG00000140025.16"/>
</dbReference>
<dbReference type="Ensembl" id="ENST00000556639.5">
    <molecule id="Q9BUY7-4"/>
    <property type="protein sequence ID" value="ENSP00000452397.1"/>
    <property type="gene ID" value="ENSG00000140025.16"/>
</dbReference>
<dbReference type="GeneID" id="90141"/>
<dbReference type="KEGG" id="hsa:90141"/>
<dbReference type="MANE-Select" id="ENST00000316738.12">
    <property type="protein sequence ID" value="ENSP00000326267.7"/>
    <property type="RefSeq nucleotide sequence ID" value="NM_145231.4"/>
    <property type="RefSeq protein sequence ID" value="NP_660274.1"/>
</dbReference>
<dbReference type="UCSC" id="uc001xxs.5">
    <molecule id="Q9BUY7-1"/>
    <property type="organism name" value="human"/>
</dbReference>
<dbReference type="AGR" id="HGNC:20357"/>
<dbReference type="CTD" id="90141"/>
<dbReference type="DisGeNET" id="90141"/>
<dbReference type="GeneCards" id="EFCAB11"/>
<dbReference type="HGNC" id="HGNC:20357">
    <property type="gene designation" value="EFCAB11"/>
</dbReference>
<dbReference type="HPA" id="ENSG00000140025">
    <property type="expression patterns" value="Tissue enhanced (testis)"/>
</dbReference>
<dbReference type="neXtProt" id="NX_Q9BUY7"/>
<dbReference type="OpenTargets" id="ENSG00000140025"/>
<dbReference type="PharmGKB" id="PA134875422"/>
<dbReference type="VEuPathDB" id="HostDB:ENSG00000140025"/>
<dbReference type="eggNOG" id="KOG0027">
    <property type="taxonomic scope" value="Eukaryota"/>
</dbReference>
<dbReference type="GeneTree" id="ENSGT00390000004917"/>
<dbReference type="HOGENOM" id="CLU_061288_22_2_1"/>
<dbReference type="InParanoid" id="Q9BUY7"/>
<dbReference type="OMA" id="YAMKHGQ"/>
<dbReference type="OrthoDB" id="26525at2759"/>
<dbReference type="PAN-GO" id="Q9BUY7">
    <property type="GO annotations" value="2 GO annotations based on evolutionary models"/>
</dbReference>
<dbReference type="PhylomeDB" id="Q9BUY7"/>
<dbReference type="TreeFam" id="TF329255"/>
<dbReference type="PathwayCommons" id="Q9BUY7"/>
<dbReference type="SignaLink" id="Q9BUY7"/>
<dbReference type="BioGRID-ORCS" id="90141">
    <property type="hits" value="13 hits in 1153 CRISPR screens"/>
</dbReference>
<dbReference type="ChiTaRS" id="EFCAB11">
    <property type="organism name" value="human"/>
</dbReference>
<dbReference type="GenomeRNAi" id="90141"/>
<dbReference type="Pharos" id="Q9BUY7">
    <property type="development level" value="Tdark"/>
</dbReference>
<dbReference type="PRO" id="PR:Q9BUY7"/>
<dbReference type="Proteomes" id="UP000005640">
    <property type="component" value="Chromosome 14"/>
</dbReference>
<dbReference type="RNAct" id="Q9BUY7">
    <property type="molecule type" value="protein"/>
</dbReference>
<dbReference type="Bgee" id="ENSG00000140025">
    <property type="expression patterns" value="Expressed in sperm and 180 other cell types or tissues"/>
</dbReference>
<dbReference type="ExpressionAtlas" id="Q9BUY7">
    <property type="expression patterns" value="baseline and differential"/>
</dbReference>
<dbReference type="GO" id="GO:0005737">
    <property type="term" value="C:cytoplasm"/>
    <property type="evidence" value="ECO:0000318"/>
    <property type="project" value="GO_Central"/>
</dbReference>
<dbReference type="GO" id="GO:0005509">
    <property type="term" value="F:calcium ion binding"/>
    <property type="evidence" value="ECO:0000318"/>
    <property type="project" value="GO_Central"/>
</dbReference>
<dbReference type="GO" id="GO:0030234">
    <property type="term" value="F:enzyme regulator activity"/>
    <property type="evidence" value="ECO:0000318"/>
    <property type="project" value="GO_Central"/>
</dbReference>
<dbReference type="GO" id="GO:0000226">
    <property type="term" value="P:microtubule cytoskeleton organization"/>
    <property type="evidence" value="ECO:0000318"/>
    <property type="project" value="GO_Central"/>
</dbReference>
<dbReference type="CDD" id="cd00051">
    <property type="entry name" value="EFh"/>
    <property type="match status" value="1"/>
</dbReference>
<dbReference type="FunFam" id="1.10.238.10:FF:000003">
    <property type="entry name" value="Calmodulin A"/>
    <property type="match status" value="1"/>
</dbReference>
<dbReference type="Gene3D" id="1.10.238.10">
    <property type="entry name" value="EF-hand"/>
    <property type="match status" value="1"/>
</dbReference>
<dbReference type="InterPro" id="IPR011992">
    <property type="entry name" value="EF-hand-dom_pair"/>
</dbReference>
<dbReference type="InterPro" id="IPR018247">
    <property type="entry name" value="EF_Hand_1_Ca_BS"/>
</dbReference>
<dbReference type="InterPro" id="IPR002048">
    <property type="entry name" value="EF_hand_dom"/>
</dbReference>
<dbReference type="InterPro" id="IPR050403">
    <property type="entry name" value="Myosin_RLC"/>
</dbReference>
<dbReference type="PANTHER" id="PTHR23049">
    <property type="entry name" value="MYOSIN REGULATORY LIGHT CHAIN 2"/>
    <property type="match status" value="1"/>
</dbReference>
<dbReference type="Pfam" id="PF13499">
    <property type="entry name" value="EF-hand_7"/>
    <property type="match status" value="1"/>
</dbReference>
<dbReference type="Pfam" id="PF13833">
    <property type="entry name" value="EF-hand_8"/>
    <property type="match status" value="1"/>
</dbReference>
<dbReference type="SMART" id="SM00054">
    <property type="entry name" value="EFh"/>
    <property type="match status" value="3"/>
</dbReference>
<dbReference type="SUPFAM" id="SSF47473">
    <property type="entry name" value="EF-hand"/>
    <property type="match status" value="1"/>
</dbReference>
<dbReference type="PROSITE" id="PS00018">
    <property type="entry name" value="EF_HAND_1"/>
    <property type="match status" value="1"/>
</dbReference>
<dbReference type="PROSITE" id="PS50222">
    <property type="entry name" value="EF_HAND_2"/>
    <property type="match status" value="3"/>
</dbReference>
<feature type="chain" id="PRO_0000286580" description="EF-hand calcium-binding domain-containing protein 11">
    <location>
        <begin position="1"/>
        <end position="163"/>
    </location>
</feature>
<feature type="domain" description="EF-hand 1" evidence="1">
    <location>
        <begin position="18"/>
        <end position="53"/>
    </location>
</feature>
<feature type="domain" description="EF-hand 2" evidence="1">
    <location>
        <begin position="91"/>
        <end position="126"/>
    </location>
</feature>
<feature type="domain" description="EF-hand 3" evidence="1">
    <location>
        <begin position="127"/>
        <end position="162"/>
    </location>
</feature>
<feature type="binding site" evidence="1">
    <location>
        <position position="140"/>
    </location>
    <ligand>
        <name>Ca(2+)</name>
        <dbReference type="ChEBI" id="CHEBI:29108"/>
    </ligand>
</feature>
<feature type="binding site" evidence="1">
    <location>
        <position position="142"/>
    </location>
    <ligand>
        <name>Ca(2+)</name>
        <dbReference type="ChEBI" id="CHEBI:29108"/>
    </ligand>
</feature>
<feature type="binding site" evidence="1">
    <location>
        <position position="144"/>
    </location>
    <ligand>
        <name>Ca(2+)</name>
        <dbReference type="ChEBI" id="CHEBI:29108"/>
    </ligand>
</feature>
<feature type="binding site" evidence="1">
    <location>
        <position position="146"/>
    </location>
    <ligand>
        <name>Ca(2+)</name>
        <dbReference type="ChEBI" id="CHEBI:29108"/>
    </ligand>
</feature>
<feature type="binding site" evidence="1">
    <location>
        <position position="151"/>
    </location>
    <ligand>
        <name>Ca(2+)</name>
        <dbReference type="ChEBI" id="CHEBI:29108"/>
    </ligand>
</feature>
<feature type="splice variant" id="VSP_055729" description="In isoform 6." evidence="5">
    <location>
        <begin position="1"/>
        <end position="48"/>
    </location>
</feature>
<feature type="splice variant" id="VSP_025100" description="In isoform 2 and isoform 3." evidence="3 4">
    <original>MFFSEARARSRTWEASPSEHRKWVE</original>
    <variation>M</variation>
    <location>
        <begin position="1"/>
        <end position="25"/>
    </location>
</feature>
<feature type="splice variant" id="VSP_041089" description="In isoform 4." evidence="4">
    <original>IEVD</original>
    <variation>KWIL</variation>
    <location>
        <begin position="58"/>
        <end position="61"/>
    </location>
</feature>
<feature type="splice variant" id="VSP_041090" description="In isoform 4." evidence="4">
    <location>
        <begin position="62"/>
        <end position="163"/>
    </location>
</feature>
<feature type="splice variant" id="VSP_025101" description="In isoform 3." evidence="4">
    <original>EVDRDSDGHVSFRDFEYALNYGQKEA</original>
    <variation>GIFSA</variation>
    <location>
        <begin position="138"/>
        <end position="163"/>
    </location>
</feature>
<feature type="splice variant" id="VSP_054591" description="In isoform 5." evidence="2">
    <original>EVDRDSDGHVSFRDFEYALNYGQKE</original>
    <variation>GIFS</variation>
    <location>
        <begin position="138"/>
        <end position="162"/>
    </location>
</feature>
<feature type="sequence variant" id="VAR_032129" description="In dbSNP:rs35435801.">
    <original>A</original>
    <variation>V</variation>
    <location>
        <position position="15"/>
    </location>
</feature>
<feature type="sequence variant" id="VAR_032130" description="In dbSNP:rs34486581.">
    <original>D</original>
    <variation>G</variation>
    <location>
        <position position="31"/>
    </location>
</feature>
<feature type="sequence variant" id="VAR_032131" description="In dbSNP:rs34911716.">
    <original>T</original>
    <variation>A</variation>
    <location>
        <position position="45"/>
    </location>
</feature>
<organism>
    <name type="scientific">Homo sapiens</name>
    <name type="common">Human</name>
    <dbReference type="NCBI Taxonomy" id="9606"/>
    <lineage>
        <taxon>Eukaryota</taxon>
        <taxon>Metazoa</taxon>
        <taxon>Chordata</taxon>
        <taxon>Craniata</taxon>
        <taxon>Vertebrata</taxon>
        <taxon>Euteleostomi</taxon>
        <taxon>Mammalia</taxon>
        <taxon>Eutheria</taxon>
        <taxon>Euarchontoglires</taxon>
        <taxon>Primates</taxon>
        <taxon>Haplorrhini</taxon>
        <taxon>Catarrhini</taxon>
        <taxon>Hominidae</taxon>
        <taxon>Homo</taxon>
    </lineage>
</organism>
<reference key="1">
    <citation type="submission" date="2003-01" db="EMBL/GenBank/DDBJ databases">
        <title>Full-length cDNA libraries and normalization.</title>
        <authorList>
            <person name="Li W.B."/>
            <person name="Gruber C."/>
            <person name="Jessee J."/>
            <person name="Polayes D."/>
        </authorList>
    </citation>
    <scope>NUCLEOTIDE SEQUENCE [LARGE SCALE MRNA] (ISOFORMS 3 AND 4)</scope>
    <source>
        <tissue>B-cell</tissue>
        <tissue>Neuroblastoma</tissue>
    </source>
</reference>
<reference key="2">
    <citation type="journal article" date="2004" name="Nat. Genet.">
        <title>Complete sequencing and characterization of 21,243 full-length human cDNAs.</title>
        <authorList>
            <person name="Ota T."/>
            <person name="Suzuki Y."/>
            <person name="Nishikawa T."/>
            <person name="Otsuki T."/>
            <person name="Sugiyama T."/>
            <person name="Irie R."/>
            <person name="Wakamatsu A."/>
            <person name="Hayashi K."/>
            <person name="Sato H."/>
            <person name="Nagai K."/>
            <person name="Kimura K."/>
            <person name="Makita H."/>
            <person name="Sekine M."/>
            <person name="Obayashi M."/>
            <person name="Nishi T."/>
            <person name="Shibahara T."/>
            <person name="Tanaka T."/>
            <person name="Ishii S."/>
            <person name="Yamamoto J."/>
            <person name="Saito K."/>
            <person name="Kawai Y."/>
            <person name="Isono Y."/>
            <person name="Nakamura Y."/>
            <person name="Nagahari K."/>
            <person name="Murakami K."/>
            <person name="Yasuda T."/>
            <person name="Iwayanagi T."/>
            <person name="Wagatsuma M."/>
            <person name="Shiratori A."/>
            <person name="Sudo H."/>
            <person name="Hosoiri T."/>
            <person name="Kaku Y."/>
            <person name="Kodaira H."/>
            <person name="Kondo H."/>
            <person name="Sugawara M."/>
            <person name="Takahashi M."/>
            <person name="Kanda K."/>
            <person name="Yokoi T."/>
            <person name="Furuya T."/>
            <person name="Kikkawa E."/>
            <person name="Omura Y."/>
            <person name="Abe K."/>
            <person name="Kamihara K."/>
            <person name="Katsuta N."/>
            <person name="Sato K."/>
            <person name="Tanikawa M."/>
            <person name="Yamazaki M."/>
            <person name="Ninomiya K."/>
            <person name="Ishibashi T."/>
            <person name="Yamashita H."/>
            <person name="Murakawa K."/>
            <person name="Fujimori K."/>
            <person name="Tanai H."/>
            <person name="Kimata M."/>
            <person name="Watanabe M."/>
            <person name="Hiraoka S."/>
            <person name="Chiba Y."/>
            <person name="Ishida S."/>
            <person name="Ono Y."/>
            <person name="Takiguchi S."/>
            <person name="Watanabe S."/>
            <person name="Yosida M."/>
            <person name="Hotuta T."/>
            <person name="Kusano J."/>
            <person name="Kanehori K."/>
            <person name="Takahashi-Fujii A."/>
            <person name="Hara H."/>
            <person name="Tanase T.-O."/>
            <person name="Nomura Y."/>
            <person name="Togiya S."/>
            <person name="Komai F."/>
            <person name="Hara R."/>
            <person name="Takeuchi K."/>
            <person name="Arita M."/>
            <person name="Imose N."/>
            <person name="Musashino K."/>
            <person name="Yuuki H."/>
            <person name="Oshima A."/>
            <person name="Sasaki N."/>
            <person name="Aotsuka S."/>
            <person name="Yoshikawa Y."/>
            <person name="Matsunawa H."/>
            <person name="Ichihara T."/>
            <person name="Shiohata N."/>
            <person name="Sano S."/>
            <person name="Moriya S."/>
            <person name="Momiyama H."/>
            <person name="Satoh N."/>
            <person name="Takami S."/>
            <person name="Terashima Y."/>
            <person name="Suzuki O."/>
            <person name="Nakagawa S."/>
            <person name="Senoh A."/>
            <person name="Mizoguchi H."/>
            <person name="Goto Y."/>
            <person name="Shimizu F."/>
            <person name="Wakebe H."/>
            <person name="Hishigaki H."/>
            <person name="Watanabe T."/>
            <person name="Sugiyama A."/>
            <person name="Takemoto M."/>
            <person name="Kawakami B."/>
            <person name="Yamazaki M."/>
            <person name="Watanabe K."/>
            <person name="Kumagai A."/>
            <person name="Itakura S."/>
            <person name="Fukuzumi Y."/>
            <person name="Fujimori Y."/>
            <person name="Komiyama M."/>
            <person name="Tashiro H."/>
            <person name="Tanigami A."/>
            <person name="Fujiwara T."/>
            <person name="Ono T."/>
            <person name="Yamada K."/>
            <person name="Fujii Y."/>
            <person name="Ozaki K."/>
            <person name="Hirao M."/>
            <person name="Ohmori Y."/>
            <person name="Kawabata A."/>
            <person name="Hikiji T."/>
            <person name="Kobatake N."/>
            <person name="Inagaki H."/>
            <person name="Ikema Y."/>
            <person name="Okamoto S."/>
            <person name="Okitani R."/>
            <person name="Kawakami T."/>
            <person name="Noguchi S."/>
            <person name="Itoh T."/>
            <person name="Shigeta K."/>
            <person name="Senba T."/>
            <person name="Matsumura K."/>
            <person name="Nakajima Y."/>
            <person name="Mizuno T."/>
            <person name="Morinaga M."/>
            <person name="Sasaki M."/>
            <person name="Togashi T."/>
            <person name="Oyama M."/>
            <person name="Hata H."/>
            <person name="Watanabe M."/>
            <person name="Komatsu T."/>
            <person name="Mizushima-Sugano J."/>
            <person name="Satoh T."/>
            <person name="Shirai Y."/>
            <person name="Takahashi Y."/>
            <person name="Nakagawa K."/>
            <person name="Okumura K."/>
            <person name="Nagase T."/>
            <person name="Nomura N."/>
            <person name="Kikuchi H."/>
            <person name="Masuho Y."/>
            <person name="Yamashita R."/>
            <person name="Nakai K."/>
            <person name="Yada T."/>
            <person name="Nakamura Y."/>
            <person name="Ohara O."/>
            <person name="Isogai T."/>
            <person name="Sugano S."/>
        </authorList>
    </citation>
    <scope>NUCLEOTIDE SEQUENCE [LARGE SCALE MRNA] (ISOFORMS 1 AND 5)</scope>
    <source>
        <tissue>Brain</tissue>
    </source>
</reference>
<reference key="3">
    <citation type="journal article" date="2007" name="BMC Genomics">
        <title>The full-ORF clone resource of the German cDNA consortium.</title>
        <authorList>
            <person name="Bechtel S."/>
            <person name="Rosenfelder H."/>
            <person name="Duda A."/>
            <person name="Schmidt C.P."/>
            <person name="Ernst U."/>
            <person name="Wellenreuther R."/>
            <person name="Mehrle A."/>
            <person name="Schuster C."/>
            <person name="Bahr A."/>
            <person name="Bloecker H."/>
            <person name="Heubner D."/>
            <person name="Hoerlein A."/>
            <person name="Michel G."/>
            <person name="Wedler H."/>
            <person name="Koehrer K."/>
            <person name="Ottenwaelder B."/>
            <person name="Poustka A."/>
            <person name="Wiemann S."/>
            <person name="Schupp I."/>
        </authorList>
    </citation>
    <scope>NUCLEOTIDE SEQUENCE [LARGE SCALE MRNA] (ISOFORM 2)</scope>
    <source>
        <tissue>Brain</tissue>
    </source>
</reference>
<reference key="4">
    <citation type="journal article" date="2003" name="Nature">
        <title>The DNA sequence and analysis of human chromosome 14.</title>
        <authorList>
            <person name="Heilig R."/>
            <person name="Eckenberg R."/>
            <person name="Petit J.-L."/>
            <person name="Fonknechten N."/>
            <person name="Da Silva C."/>
            <person name="Cattolico L."/>
            <person name="Levy M."/>
            <person name="Barbe V."/>
            <person name="De Berardinis V."/>
            <person name="Ureta-Vidal A."/>
            <person name="Pelletier E."/>
            <person name="Vico V."/>
            <person name="Anthouard V."/>
            <person name="Rowen L."/>
            <person name="Madan A."/>
            <person name="Qin S."/>
            <person name="Sun H."/>
            <person name="Du H."/>
            <person name="Pepin K."/>
            <person name="Artiguenave F."/>
            <person name="Robert C."/>
            <person name="Cruaud C."/>
            <person name="Bruels T."/>
            <person name="Jaillon O."/>
            <person name="Friedlander L."/>
            <person name="Samson G."/>
            <person name="Brottier P."/>
            <person name="Cure S."/>
            <person name="Segurens B."/>
            <person name="Aniere F."/>
            <person name="Samain S."/>
            <person name="Crespeau H."/>
            <person name="Abbasi N."/>
            <person name="Aiach N."/>
            <person name="Boscus D."/>
            <person name="Dickhoff R."/>
            <person name="Dors M."/>
            <person name="Dubois I."/>
            <person name="Friedman C."/>
            <person name="Gouyvenoux M."/>
            <person name="James R."/>
            <person name="Madan A."/>
            <person name="Mairey-Estrada B."/>
            <person name="Mangenot S."/>
            <person name="Martins N."/>
            <person name="Menard M."/>
            <person name="Oztas S."/>
            <person name="Ratcliffe A."/>
            <person name="Shaffer T."/>
            <person name="Trask B."/>
            <person name="Vacherie B."/>
            <person name="Bellemere C."/>
            <person name="Belser C."/>
            <person name="Besnard-Gonnet M."/>
            <person name="Bartol-Mavel D."/>
            <person name="Boutard M."/>
            <person name="Briez-Silla S."/>
            <person name="Combette S."/>
            <person name="Dufosse-Laurent V."/>
            <person name="Ferron C."/>
            <person name="Lechaplais C."/>
            <person name="Louesse C."/>
            <person name="Muselet D."/>
            <person name="Magdelenat G."/>
            <person name="Pateau E."/>
            <person name="Petit E."/>
            <person name="Sirvain-Trukniewicz P."/>
            <person name="Trybou A."/>
            <person name="Vega-Czarny N."/>
            <person name="Bataille E."/>
            <person name="Bluet E."/>
            <person name="Bordelais I."/>
            <person name="Dubois M."/>
            <person name="Dumont C."/>
            <person name="Guerin T."/>
            <person name="Haffray S."/>
            <person name="Hammadi R."/>
            <person name="Muanga J."/>
            <person name="Pellouin V."/>
            <person name="Robert D."/>
            <person name="Wunderle E."/>
            <person name="Gauguet G."/>
            <person name="Roy A."/>
            <person name="Sainte-Marthe L."/>
            <person name="Verdier J."/>
            <person name="Verdier-Discala C."/>
            <person name="Hillier L.W."/>
            <person name="Fulton L."/>
            <person name="McPherson J."/>
            <person name="Matsuda F."/>
            <person name="Wilson R."/>
            <person name="Scarpelli C."/>
            <person name="Gyapay G."/>
            <person name="Wincker P."/>
            <person name="Saurin W."/>
            <person name="Quetier F."/>
            <person name="Waterston R."/>
            <person name="Hood L."/>
            <person name="Weissenbach J."/>
        </authorList>
    </citation>
    <scope>NUCLEOTIDE SEQUENCE [LARGE SCALE GENOMIC DNA]</scope>
</reference>
<reference key="5">
    <citation type="submission" date="2005-07" db="EMBL/GenBank/DDBJ databases">
        <authorList>
            <person name="Mural R.J."/>
            <person name="Istrail S."/>
            <person name="Sutton G.G."/>
            <person name="Florea L."/>
            <person name="Halpern A.L."/>
            <person name="Mobarry C.M."/>
            <person name="Lippert R."/>
            <person name="Walenz B."/>
            <person name="Shatkay H."/>
            <person name="Dew I."/>
            <person name="Miller J.R."/>
            <person name="Flanigan M.J."/>
            <person name="Edwards N.J."/>
            <person name="Bolanos R."/>
            <person name="Fasulo D."/>
            <person name="Halldorsson B.V."/>
            <person name="Hannenhalli S."/>
            <person name="Turner R."/>
            <person name="Yooseph S."/>
            <person name="Lu F."/>
            <person name="Nusskern D.R."/>
            <person name="Shue B.C."/>
            <person name="Zheng X.H."/>
            <person name="Zhong F."/>
            <person name="Delcher A.L."/>
            <person name="Huson D.H."/>
            <person name="Kravitz S.A."/>
            <person name="Mouchard L."/>
            <person name="Reinert K."/>
            <person name="Remington K.A."/>
            <person name="Clark A.G."/>
            <person name="Waterman M.S."/>
            <person name="Eichler E.E."/>
            <person name="Adams M.D."/>
            <person name="Hunkapiller M.W."/>
            <person name="Myers E.W."/>
            <person name="Venter J.C."/>
        </authorList>
    </citation>
    <scope>NUCLEOTIDE SEQUENCE [LARGE SCALE GENOMIC DNA]</scope>
</reference>
<reference key="6">
    <citation type="journal article" date="2004" name="Genome Res.">
        <title>The status, quality, and expansion of the NIH full-length cDNA project: the Mammalian Gene Collection (MGC).</title>
        <authorList>
            <consortium name="The MGC Project Team"/>
        </authorList>
    </citation>
    <scope>NUCLEOTIDE SEQUENCE [LARGE SCALE MRNA] (ISOFORM 1)</scope>
    <source>
        <tissue>Eye</tissue>
    </source>
</reference>